<gene>
    <name evidence="1" type="primary">rlmN</name>
    <name type="ordered locus">azo0924</name>
</gene>
<name>RLMN_AZOSB</name>
<evidence type="ECO:0000255" key="1">
    <source>
        <dbReference type="HAMAP-Rule" id="MF_01849"/>
    </source>
</evidence>
<evidence type="ECO:0000255" key="2">
    <source>
        <dbReference type="PROSITE-ProRule" id="PRU01266"/>
    </source>
</evidence>
<comment type="function">
    <text evidence="1">Specifically methylates position 2 of adenine 2503 in 23S rRNA and position 2 of adenine 37 in tRNAs. m2A2503 modification seems to play a crucial role in the proofreading step occurring at the peptidyl transferase center and thus would serve to optimize ribosomal fidelity.</text>
</comment>
<comment type="catalytic activity">
    <reaction evidence="1">
        <text>adenosine(2503) in 23S rRNA + 2 reduced [2Fe-2S]-[ferredoxin] + 2 S-adenosyl-L-methionine = 2-methyladenosine(2503) in 23S rRNA + 5'-deoxyadenosine + L-methionine + 2 oxidized [2Fe-2S]-[ferredoxin] + S-adenosyl-L-homocysteine</text>
        <dbReference type="Rhea" id="RHEA:42916"/>
        <dbReference type="Rhea" id="RHEA-COMP:10000"/>
        <dbReference type="Rhea" id="RHEA-COMP:10001"/>
        <dbReference type="Rhea" id="RHEA-COMP:10152"/>
        <dbReference type="Rhea" id="RHEA-COMP:10282"/>
        <dbReference type="ChEBI" id="CHEBI:17319"/>
        <dbReference type="ChEBI" id="CHEBI:33737"/>
        <dbReference type="ChEBI" id="CHEBI:33738"/>
        <dbReference type="ChEBI" id="CHEBI:57844"/>
        <dbReference type="ChEBI" id="CHEBI:57856"/>
        <dbReference type="ChEBI" id="CHEBI:59789"/>
        <dbReference type="ChEBI" id="CHEBI:74411"/>
        <dbReference type="ChEBI" id="CHEBI:74497"/>
        <dbReference type="EC" id="2.1.1.192"/>
    </reaction>
</comment>
<comment type="catalytic activity">
    <reaction evidence="1">
        <text>adenosine(37) in tRNA + 2 reduced [2Fe-2S]-[ferredoxin] + 2 S-adenosyl-L-methionine = 2-methyladenosine(37) in tRNA + 5'-deoxyadenosine + L-methionine + 2 oxidized [2Fe-2S]-[ferredoxin] + S-adenosyl-L-homocysteine</text>
        <dbReference type="Rhea" id="RHEA:43332"/>
        <dbReference type="Rhea" id="RHEA-COMP:10000"/>
        <dbReference type="Rhea" id="RHEA-COMP:10001"/>
        <dbReference type="Rhea" id="RHEA-COMP:10162"/>
        <dbReference type="Rhea" id="RHEA-COMP:10485"/>
        <dbReference type="ChEBI" id="CHEBI:17319"/>
        <dbReference type="ChEBI" id="CHEBI:33737"/>
        <dbReference type="ChEBI" id="CHEBI:33738"/>
        <dbReference type="ChEBI" id="CHEBI:57844"/>
        <dbReference type="ChEBI" id="CHEBI:57856"/>
        <dbReference type="ChEBI" id="CHEBI:59789"/>
        <dbReference type="ChEBI" id="CHEBI:74411"/>
        <dbReference type="ChEBI" id="CHEBI:74497"/>
        <dbReference type="EC" id="2.1.1.192"/>
    </reaction>
</comment>
<comment type="cofactor">
    <cofactor evidence="1">
        <name>[4Fe-4S] cluster</name>
        <dbReference type="ChEBI" id="CHEBI:49883"/>
    </cofactor>
    <text evidence="1">Binds 1 [4Fe-4S] cluster. The cluster is coordinated with 3 cysteines and an exchangeable S-adenosyl-L-methionine.</text>
</comment>
<comment type="subcellular location">
    <subcellularLocation>
        <location evidence="1">Cytoplasm</location>
    </subcellularLocation>
</comment>
<comment type="miscellaneous">
    <text evidence="1">Reaction proceeds by a ping-pong mechanism involving intermediate methylation of a conserved cysteine residue.</text>
</comment>
<comment type="similarity">
    <text evidence="1">Belongs to the radical SAM superfamily. RlmN family.</text>
</comment>
<accession>A1K3Y6</accession>
<dbReference type="EC" id="2.1.1.192" evidence="1"/>
<dbReference type="EMBL" id="AM406670">
    <property type="protein sequence ID" value="CAL93541.1"/>
    <property type="molecule type" value="Genomic_DNA"/>
</dbReference>
<dbReference type="RefSeq" id="WP_011764658.1">
    <property type="nucleotide sequence ID" value="NC_008702.1"/>
</dbReference>
<dbReference type="SMR" id="A1K3Y6"/>
<dbReference type="STRING" id="62928.azo0924"/>
<dbReference type="KEGG" id="aoa:dqs_0996"/>
<dbReference type="KEGG" id="azo:azo0924"/>
<dbReference type="eggNOG" id="COG0820">
    <property type="taxonomic scope" value="Bacteria"/>
</dbReference>
<dbReference type="HOGENOM" id="CLU_029101_0_0_4"/>
<dbReference type="OrthoDB" id="9793973at2"/>
<dbReference type="Proteomes" id="UP000002588">
    <property type="component" value="Chromosome"/>
</dbReference>
<dbReference type="GO" id="GO:0005737">
    <property type="term" value="C:cytoplasm"/>
    <property type="evidence" value="ECO:0007669"/>
    <property type="project" value="UniProtKB-SubCell"/>
</dbReference>
<dbReference type="GO" id="GO:0051539">
    <property type="term" value="F:4 iron, 4 sulfur cluster binding"/>
    <property type="evidence" value="ECO:0007669"/>
    <property type="project" value="UniProtKB-UniRule"/>
</dbReference>
<dbReference type="GO" id="GO:0046872">
    <property type="term" value="F:metal ion binding"/>
    <property type="evidence" value="ECO:0007669"/>
    <property type="project" value="UniProtKB-KW"/>
</dbReference>
<dbReference type="GO" id="GO:0070040">
    <property type="term" value="F:rRNA (adenine(2503)-C2-)-methyltransferase activity"/>
    <property type="evidence" value="ECO:0007669"/>
    <property type="project" value="UniProtKB-UniRule"/>
</dbReference>
<dbReference type="GO" id="GO:0019843">
    <property type="term" value="F:rRNA binding"/>
    <property type="evidence" value="ECO:0007669"/>
    <property type="project" value="UniProtKB-UniRule"/>
</dbReference>
<dbReference type="GO" id="GO:0002935">
    <property type="term" value="F:tRNA (adenine(37)-C2)-methyltransferase activity"/>
    <property type="evidence" value="ECO:0007669"/>
    <property type="project" value="UniProtKB-UniRule"/>
</dbReference>
<dbReference type="GO" id="GO:0000049">
    <property type="term" value="F:tRNA binding"/>
    <property type="evidence" value="ECO:0007669"/>
    <property type="project" value="UniProtKB-UniRule"/>
</dbReference>
<dbReference type="GO" id="GO:0070475">
    <property type="term" value="P:rRNA base methylation"/>
    <property type="evidence" value="ECO:0007669"/>
    <property type="project" value="UniProtKB-UniRule"/>
</dbReference>
<dbReference type="GO" id="GO:0030488">
    <property type="term" value="P:tRNA methylation"/>
    <property type="evidence" value="ECO:0007669"/>
    <property type="project" value="UniProtKB-UniRule"/>
</dbReference>
<dbReference type="CDD" id="cd01335">
    <property type="entry name" value="Radical_SAM"/>
    <property type="match status" value="1"/>
</dbReference>
<dbReference type="FunFam" id="1.10.150.530:FF:000003">
    <property type="entry name" value="Dual-specificity RNA methyltransferase RlmN"/>
    <property type="match status" value="1"/>
</dbReference>
<dbReference type="FunFam" id="3.20.20.70:FF:000008">
    <property type="entry name" value="Dual-specificity RNA methyltransferase RlmN"/>
    <property type="match status" value="1"/>
</dbReference>
<dbReference type="Gene3D" id="1.10.150.530">
    <property type="match status" value="1"/>
</dbReference>
<dbReference type="Gene3D" id="3.20.20.70">
    <property type="entry name" value="Aldolase class I"/>
    <property type="match status" value="1"/>
</dbReference>
<dbReference type="HAMAP" id="MF_01849">
    <property type="entry name" value="RNA_methyltr_RlmN"/>
    <property type="match status" value="1"/>
</dbReference>
<dbReference type="InterPro" id="IPR013785">
    <property type="entry name" value="Aldolase_TIM"/>
</dbReference>
<dbReference type="InterPro" id="IPR040072">
    <property type="entry name" value="Methyltransferase_A"/>
</dbReference>
<dbReference type="InterPro" id="IPR048641">
    <property type="entry name" value="RlmN_N"/>
</dbReference>
<dbReference type="InterPro" id="IPR027492">
    <property type="entry name" value="RNA_MTrfase_RlmN"/>
</dbReference>
<dbReference type="InterPro" id="IPR004383">
    <property type="entry name" value="rRNA_lsu_MTrfase_RlmN/Cfr"/>
</dbReference>
<dbReference type="InterPro" id="IPR007197">
    <property type="entry name" value="rSAM"/>
</dbReference>
<dbReference type="NCBIfam" id="TIGR00048">
    <property type="entry name" value="rRNA_mod_RlmN"/>
    <property type="match status" value="1"/>
</dbReference>
<dbReference type="PANTHER" id="PTHR30544">
    <property type="entry name" value="23S RRNA METHYLTRANSFERASE"/>
    <property type="match status" value="1"/>
</dbReference>
<dbReference type="PANTHER" id="PTHR30544:SF5">
    <property type="entry name" value="RADICAL SAM CORE DOMAIN-CONTAINING PROTEIN"/>
    <property type="match status" value="1"/>
</dbReference>
<dbReference type="Pfam" id="PF04055">
    <property type="entry name" value="Radical_SAM"/>
    <property type="match status" value="1"/>
</dbReference>
<dbReference type="Pfam" id="PF21016">
    <property type="entry name" value="RlmN_N"/>
    <property type="match status" value="1"/>
</dbReference>
<dbReference type="PIRSF" id="PIRSF006004">
    <property type="entry name" value="CHP00048"/>
    <property type="match status" value="1"/>
</dbReference>
<dbReference type="SFLD" id="SFLDF00275">
    <property type="entry name" value="adenosine_C2_methyltransferase"/>
    <property type="match status" value="1"/>
</dbReference>
<dbReference type="SFLD" id="SFLDS00029">
    <property type="entry name" value="Radical_SAM"/>
    <property type="match status" value="1"/>
</dbReference>
<dbReference type="SUPFAM" id="SSF102114">
    <property type="entry name" value="Radical SAM enzymes"/>
    <property type="match status" value="1"/>
</dbReference>
<dbReference type="PROSITE" id="PS51918">
    <property type="entry name" value="RADICAL_SAM"/>
    <property type="match status" value="1"/>
</dbReference>
<protein>
    <recommendedName>
        <fullName evidence="1">Dual-specificity RNA methyltransferase RlmN</fullName>
        <ecNumber evidence="1">2.1.1.192</ecNumber>
    </recommendedName>
    <alternativeName>
        <fullName evidence="1">23S rRNA (adenine(2503)-C(2))-methyltransferase</fullName>
    </alternativeName>
    <alternativeName>
        <fullName evidence="1">23S rRNA m2A2503 methyltransferase</fullName>
    </alternativeName>
    <alternativeName>
        <fullName evidence="1">Ribosomal RNA large subunit methyltransferase N</fullName>
    </alternativeName>
    <alternativeName>
        <fullName evidence="1">tRNA (adenine(37)-C(2))-methyltransferase</fullName>
    </alternativeName>
    <alternativeName>
        <fullName evidence="1">tRNA m2A37 methyltransferase</fullName>
    </alternativeName>
</protein>
<proteinExistence type="inferred from homology"/>
<organism>
    <name type="scientific">Azoarcus sp. (strain BH72)</name>
    <dbReference type="NCBI Taxonomy" id="418699"/>
    <lineage>
        <taxon>Bacteria</taxon>
        <taxon>Pseudomonadati</taxon>
        <taxon>Pseudomonadota</taxon>
        <taxon>Betaproteobacteria</taxon>
        <taxon>Rhodocyclales</taxon>
        <taxon>Zoogloeaceae</taxon>
        <taxon>Azoarcus</taxon>
    </lineage>
</organism>
<reference key="1">
    <citation type="journal article" date="2006" name="Nat. Biotechnol.">
        <title>Complete genome of the mutualistic, N2-fixing grass endophyte Azoarcus sp. strain BH72.</title>
        <authorList>
            <person name="Krause A."/>
            <person name="Ramakumar A."/>
            <person name="Bartels D."/>
            <person name="Battistoni F."/>
            <person name="Bekel T."/>
            <person name="Boch J."/>
            <person name="Boehm M."/>
            <person name="Friedrich F."/>
            <person name="Hurek T."/>
            <person name="Krause L."/>
            <person name="Linke B."/>
            <person name="McHardy A.C."/>
            <person name="Sarkar A."/>
            <person name="Schneiker S."/>
            <person name="Syed A.A."/>
            <person name="Thauer R."/>
            <person name="Vorhoelter F.-J."/>
            <person name="Weidner S."/>
            <person name="Puehler A."/>
            <person name="Reinhold-Hurek B."/>
            <person name="Kaiser O."/>
            <person name="Goesmann A."/>
        </authorList>
    </citation>
    <scope>NUCLEOTIDE SEQUENCE [LARGE SCALE GENOMIC DNA]</scope>
    <source>
        <strain>BH72</strain>
    </source>
</reference>
<feature type="chain" id="PRO_0000350021" description="Dual-specificity RNA methyltransferase RlmN">
    <location>
        <begin position="1"/>
        <end position="375"/>
    </location>
</feature>
<feature type="domain" description="Radical SAM core" evidence="2">
    <location>
        <begin position="99"/>
        <end position="346"/>
    </location>
</feature>
<feature type="active site" description="Proton acceptor" evidence="1">
    <location>
        <position position="93"/>
    </location>
</feature>
<feature type="active site" description="S-methylcysteine intermediate" evidence="1">
    <location>
        <position position="351"/>
    </location>
</feature>
<feature type="binding site" evidence="1">
    <location>
        <position position="113"/>
    </location>
    <ligand>
        <name>[4Fe-4S] cluster</name>
        <dbReference type="ChEBI" id="CHEBI:49883"/>
        <note>4Fe-4S-S-AdoMet</note>
    </ligand>
</feature>
<feature type="binding site" evidence="1">
    <location>
        <position position="117"/>
    </location>
    <ligand>
        <name>[4Fe-4S] cluster</name>
        <dbReference type="ChEBI" id="CHEBI:49883"/>
        <note>4Fe-4S-S-AdoMet</note>
    </ligand>
</feature>
<feature type="binding site" evidence="1">
    <location>
        <position position="120"/>
    </location>
    <ligand>
        <name>[4Fe-4S] cluster</name>
        <dbReference type="ChEBI" id="CHEBI:49883"/>
        <note>4Fe-4S-S-AdoMet</note>
    </ligand>
</feature>
<feature type="binding site" evidence="1">
    <location>
        <begin position="177"/>
        <end position="178"/>
    </location>
    <ligand>
        <name>S-adenosyl-L-methionine</name>
        <dbReference type="ChEBI" id="CHEBI:59789"/>
    </ligand>
</feature>
<feature type="binding site" evidence="1">
    <location>
        <position position="209"/>
    </location>
    <ligand>
        <name>S-adenosyl-L-methionine</name>
        <dbReference type="ChEBI" id="CHEBI:59789"/>
    </ligand>
</feature>
<feature type="binding site" evidence="1">
    <location>
        <begin position="231"/>
        <end position="233"/>
    </location>
    <ligand>
        <name>S-adenosyl-L-methionine</name>
        <dbReference type="ChEBI" id="CHEBI:59789"/>
    </ligand>
</feature>
<feature type="binding site" evidence="1">
    <location>
        <position position="308"/>
    </location>
    <ligand>
        <name>S-adenosyl-L-methionine</name>
        <dbReference type="ChEBI" id="CHEBI:59789"/>
    </ligand>
</feature>
<feature type="disulfide bond" description="(transient)" evidence="1">
    <location>
        <begin position="106"/>
        <end position="351"/>
    </location>
</feature>
<sequence length="375" mass="41564">MNTPVNLLDFDVDGLVDWFAGLGEKPFRARQVMRWMHREGCDDFDQMTDVAKSLRAKLKEIAVIRPPVPVRDSVSSDGTRKWLLDVGNANAVETVFIPETNRGTLCVSSQAGCALDCAFCSTGKQGFNRNLTAAEIIGQLWLANKLLGAARDAAADLEAGEKDNGRIISNVVMMGMGEPLANFDNVVTALRLMLDDHAYGLSRRRVTVSTSGIVPAIDRLRDECPVALAVSLHASNDALRDRLVPINQKYPLRELMAACQRYLERAPRDFITFEYVMLDGVNDQEAHARELIALVRDVPCKFNLIPFNPFPNSGFQRSNAERIRRFAGILLDAGIVTTTRKTRGDDVDAACGQLAGQVQDKTRRTVRLKQSMEVR</sequence>
<keyword id="KW-0004">4Fe-4S</keyword>
<keyword id="KW-0963">Cytoplasm</keyword>
<keyword id="KW-1015">Disulfide bond</keyword>
<keyword id="KW-0408">Iron</keyword>
<keyword id="KW-0411">Iron-sulfur</keyword>
<keyword id="KW-0479">Metal-binding</keyword>
<keyword id="KW-0489">Methyltransferase</keyword>
<keyword id="KW-1185">Reference proteome</keyword>
<keyword id="KW-0698">rRNA processing</keyword>
<keyword id="KW-0949">S-adenosyl-L-methionine</keyword>
<keyword id="KW-0808">Transferase</keyword>
<keyword id="KW-0819">tRNA processing</keyword>